<sequence>MRELYLKTLKKEVVPSEGCTEPIAIAYAASIAAEYLKGEIKEVNIYLSKNVIKNALGVGIPGTGGVGIEIAAALGISIQKSYKKLTILSNFTEDELKKAKEIVDKNIINIKQKNTNKALYIEVELLSETSKAKVIIEDTHTNVTLIECDDEIIMDNNSEVSEDLEEDYNLFKIADIYNFAKEADFDDIKFILESAKMNEKVSEEGLKGDYGLQVGSKIIQKGNFNLFSNDASNKIIAASAAASDARMDGCAMPIMTTAGSGNQGIACSIPVAQTSRLLDKSEEELARALVLSNLVTIRIKKHMGRLSPLCGAGIAGATGASCGITYLLGGDLENINYCINNMISDLSGMICDGAKETCALKIATGTNAAIQCANLAINGISATANDGIVAKDVEETIESIETLIQNGFKNVDDTILNIMLEKKKNNK</sequence>
<gene>
    <name type="ordered locus">CPR_0790</name>
</gene>
<reference key="1">
    <citation type="journal article" date="2006" name="Genome Res.">
        <title>Skewed genomic variability in strains of the toxigenic bacterial pathogen, Clostridium perfringens.</title>
        <authorList>
            <person name="Myers G.S.A."/>
            <person name="Rasko D.A."/>
            <person name="Cheung J.K."/>
            <person name="Ravel J."/>
            <person name="Seshadri R."/>
            <person name="DeBoy R.T."/>
            <person name="Ren Q."/>
            <person name="Varga J."/>
            <person name="Awad M.M."/>
            <person name="Brinkac L.M."/>
            <person name="Daugherty S.C."/>
            <person name="Haft D.H."/>
            <person name="Dodson R.J."/>
            <person name="Madupu R."/>
            <person name="Nelson W.C."/>
            <person name="Rosovitz M.J."/>
            <person name="Sullivan S.A."/>
            <person name="Khouri H."/>
            <person name="Dimitrov G.I."/>
            <person name="Watkins K.L."/>
            <person name="Mulligan S."/>
            <person name="Benton J."/>
            <person name="Radune D."/>
            <person name="Fisher D.J."/>
            <person name="Atkins H.S."/>
            <person name="Hiscox T."/>
            <person name="Jost B.H."/>
            <person name="Billington S.J."/>
            <person name="Songer J.G."/>
            <person name="McClane B.A."/>
            <person name="Titball R.W."/>
            <person name="Rood J.I."/>
            <person name="Melville S.B."/>
            <person name="Paulsen I.T."/>
        </authorList>
    </citation>
    <scope>NUCLEOTIDE SEQUENCE [LARGE SCALE GENOMIC DNA]</scope>
    <source>
        <strain>SM101 / Type A</strain>
    </source>
</reference>
<dbReference type="EMBL" id="CP000312">
    <property type="protein sequence ID" value="ABG85650.1"/>
    <property type="molecule type" value="Genomic_DNA"/>
</dbReference>
<dbReference type="RefSeq" id="WP_011591849.1">
    <property type="nucleotide sequence ID" value="NC_008262.1"/>
</dbReference>
<dbReference type="SMR" id="Q0SUU2"/>
<dbReference type="KEGG" id="cpr:CPR_0790"/>
<dbReference type="BioCyc" id="CPER289380:GI76-810-MONOMER"/>
<dbReference type="Proteomes" id="UP000001824">
    <property type="component" value="Chromosome"/>
</dbReference>
<dbReference type="GO" id="GO:0080146">
    <property type="term" value="F:L-cysteine desulfhydrase activity"/>
    <property type="evidence" value="ECO:0007669"/>
    <property type="project" value="TreeGrafter"/>
</dbReference>
<dbReference type="GO" id="GO:0019450">
    <property type="term" value="P:L-cysteine catabolic process to pyruvate"/>
    <property type="evidence" value="ECO:0007669"/>
    <property type="project" value="TreeGrafter"/>
</dbReference>
<dbReference type="HAMAP" id="MF_01845">
    <property type="entry name" value="UPF0597"/>
    <property type="match status" value="1"/>
</dbReference>
<dbReference type="InterPro" id="IPR005130">
    <property type="entry name" value="Ser_deHydtase-like_asu"/>
</dbReference>
<dbReference type="InterPro" id="IPR021144">
    <property type="entry name" value="UPF0597"/>
</dbReference>
<dbReference type="PANTHER" id="PTHR30501">
    <property type="entry name" value="UPF0597 PROTEIN YHAM"/>
    <property type="match status" value="1"/>
</dbReference>
<dbReference type="PANTHER" id="PTHR30501:SF2">
    <property type="entry name" value="UPF0597 PROTEIN YHAM"/>
    <property type="match status" value="1"/>
</dbReference>
<dbReference type="Pfam" id="PF03313">
    <property type="entry name" value="SDH_alpha"/>
    <property type="match status" value="1"/>
</dbReference>
<dbReference type="PIRSF" id="PIRSF006054">
    <property type="entry name" value="UCP006054"/>
    <property type="match status" value="1"/>
</dbReference>
<name>Y790_CLOPS</name>
<protein>
    <recommendedName>
        <fullName evidence="1">UPF0597 protein CPR_0790</fullName>
    </recommendedName>
</protein>
<organism>
    <name type="scientific">Clostridium perfringens (strain SM101 / Type A)</name>
    <dbReference type="NCBI Taxonomy" id="289380"/>
    <lineage>
        <taxon>Bacteria</taxon>
        <taxon>Bacillati</taxon>
        <taxon>Bacillota</taxon>
        <taxon>Clostridia</taxon>
        <taxon>Eubacteriales</taxon>
        <taxon>Clostridiaceae</taxon>
        <taxon>Clostridium</taxon>
    </lineage>
</organism>
<feature type="chain" id="PRO_0000339808" description="UPF0597 protein CPR_0790">
    <location>
        <begin position="1"/>
        <end position="427"/>
    </location>
</feature>
<proteinExistence type="inferred from homology"/>
<accession>Q0SUU2</accession>
<evidence type="ECO:0000255" key="1">
    <source>
        <dbReference type="HAMAP-Rule" id="MF_01845"/>
    </source>
</evidence>
<comment type="similarity">
    <text evidence="1">Belongs to the UPF0597 family.</text>
</comment>